<comment type="function">
    <text evidence="1">Probable adapter protein located at the actin cytoskeleton that promotes cell attachment. Necessary for the migratory capacity of epithelial cells. Overexpression enhances cell adhesion to collagen and fibronectin and suppresses anchorage independent growth. May contribute to tumor cell migratory capacity (By similarity).</text>
</comment>
<comment type="subunit">
    <text evidence="2 3">Interacts with alpha-actinins ACTN1 and ACTN4, FLNA and MYH9 (By similarity). Interacts (via LIM zinc-binding domain) with MKRN2 (By similarity).</text>
</comment>
<comment type="subcellular location">
    <subcellularLocation>
        <location>Cytoplasm</location>
    </subcellularLocation>
    <subcellularLocation>
        <location>Cytoplasm</location>
        <location>Cytoskeleton</location>
    </subcellularLocation>
    <text evidence="1">Localizes at the cytoskeleton. Colocalizes with beta-1 integrin (ITGB1) and alpha-actinin but not with paxillin (PXN) (By similarity).</text>
</comment>
<gene>
    <name type="primary">PDLIM2</name>
</gene>
<dbReference type="EMBL" id="BC102452">
    <property type="protein sequence ID" value="AAI02453.1"/>
    <property type="molecule type" value="mRNA"/>
</dbReference>
<dbReference type="RefSeq" id="NP_001029602.1">
    <property type="nucleotide sequence ID" value="NM_001034430.2"/>
</dbReference>
<dbReference type="SMR" id="Q3T0C8"/>
<dbReference type="FunCoup" id="Q3T0C8">
    <property type="interactions" value="156"/>
</dbReference>
<dbReference type="STRING" id="9913.ENSBTAP00000065726"/>
<dbReference type="iPTMnet" id="Q3T0C8"/>
<dbReference type="PaxDb" id="9913-ENSBTAP00000009697"/>
<dbReference type="PeptideAtlas" id="Q3T0C8"/>
<dbReference type="Ensembl" id="ENSBTAT00000009697.6">
    <property type="protein sequence ID" value="ENSBTAP00000009697.5"/>
    <property type="gene ID" value="ENSBTAG00000007369.7"/>
</dbReference>
<dbReference type="GeneID" id="512907"/>
<dbReference type="KEGG" id="bta:512907"/>
<dbReference type="CTD" id="64236"/>
<dbReference type="VEuPathDB" id="HostDB:ENSBTAG00000007369"/>
<dbReference type="VGNC" id="VGNC:32708">
    <property type="gene designation" value="PDLIM2"/>
</dbReference>
<dbReference type="eggNOG" id="KOG1703">
    <property type="taxonomic scope" value="Eukaryota"/>
</dbReference>
<dbReference type="GeneTree" id="ENSGT00940000160418"/>
<dbReference type="HOGENOM" id="CLU_038114_1_1_1"/>
<dbReference type="InParanoid" id="Q3T0C8"/>
<dbReference type="OMA" id="MRGHFWF"/>
<dbReference type="OrthoDB" id="445995at2759"/>
<dbReference type="TreeFam" id="TF106408"/>
<dbReference type="Proteomes" id="UP000009136">
    <property type="component" value="Chromosome 8"/>
</dbReference>
<dbReference type="Bgee" id="ENSBTAG00000007369">
    <property type="expression patterns" value="Expressed in esophagus and 104 other cell types or tissues"/>
</dbReference>
<dbReference type="GO" id="GO:0005912">
    <property type="term" value="C:adherens junction"/>
    <property type="evidence" value="ECO:0000318"/>
    <property type="project" value="GO_Central"/>
</dbReference>
<dbReference type="GO" id="GO:0031941">
    <property type="term" value="C:filamentous actin"/>
    <property type="evidence" value="ECO:0000318"/>
    <property type="project" value="GO_Central"/>
</dbReference>
<dbReference type="GO" id="GO:0001725">
    <property type="term" value="C:stress fiber"/>
    <property type="evidence" value="ECO:0000318"/>
    <property type="project" value="GO_Central"/>
</dbReference>
<dbReference type="GO" id="GO:0030018">
    <property type="term" value="C:Z disc"/>
    <property type="evidence" value="ECO:0000318"/>
    <property type="project" value="GO_Central"/>
</dbReference>
<dbReference type="GO" id="GO:0003779">
    <property type="term" value="F:actin binding"/>
    <property type="evidence" value="ECO:0000318"/>
    <property type="project" value="GO_Central"/>
</dbReference>
<dbReference type="GO" id="GO:0046872">
    <property type="term" value="F:metal ion binding"/>
    <property type="evidence" value="ECO:0007669"/>
    <property type="project" value="UniProtKB-KW"/>
</dbReference>
<dbReference type="GO" id="GO:0051371">
    <property type="term" value="F:muscle alpha-actinin binding"/>
    <property type="evidence" value="ECO:0000318"/>
    <property type="project" value="GO_Central"/>
</dbReference>
<dbReference type="GO" id="GO:0031625">
    <property type="term" value="F:ubiquitin protein ligase binding"/>
    <property type="evidence" value="ECO:0007669"/>
    <property type="project" value="Ensembl"/>
</dbReference>
<dbReference type="GO" id="GO:0030036">
    <property type="term" value="P:actin cytoskeleton organization"/>
    <property type="evidence" value="ECO:0000318"/>
    <property type="project" value="GO_Central"/>
</dbReference>
<dbReference type="GO" id="GO:0007507">
    <property type="term" value="P:heart development"/>
    <property type="evidence" value="ECO:0000318"/>
    <property type="project" value="GO_Central"/>
</dbReference>
<dbReference type="GO" id="GO:0061061">
    <property type="term" value="P:muscle structure development"/>
    <property type="evidence" value="ECO:0000318"/>
    <property type="project" value="GO_Central"/>
</dbReference>
<dbReference type="GO" id="GO:0030163">
    <property type="term" value="P:protein catabolic process"/>
    <property type="evidence" value="ECO:0007669"/>
    <property type="project" value="Ensembl"/>
</dbReference>
<dbReference type="CDD" id="cd09449">
    <property type="entry name" value="LIM_Mystique"/>
    <property type="match status" value="1"/>
</dbReference>
<dbReference type="CDD" id="cd06753">
    <property type="entry name" value="PDZ_PDLIM-like"/>
    <property type="match status" value="1"/>
</dbReference>
<dbReference type="FunFam" id="2.10.110.10:FF:000085">
    <property type="entry name" value="PDZ and LIM domain 2 (mystique)"/>
    <property type="match status" value="1"/>
</dbReference>
<dbReference type="FunFam" id="2.30.42.10:FF:000130">
    <property type="entry name" value="PDZ and LIM domain 2 (mystique)"/>
    <property type="match status" value="1"/>
</dbReference>
<dbReference type="Gene3D" id="2.30.42.10">
    <property type="match status" value="1"/>
</dbReference>
<dbReference type="Gene3D" id="2.10.110.10">
    <property type="entry name" value="Cysteine Rich Protein"/>
    <property type="match status" value="1"/>
</dbReference>
<dbReference type="InterPro" id="IPR031847">
    <property type="entry name" value="PDLI1-4/Zasp-like_mid"/>
</dbReference>
<dbReference type="InterPro" id="IPR001478">
    <property type="entry name" value="PDZ"/>
</dbReference>
<dbReference type="InterPro" id="IPR050604">
    <property type="entry name" value="PDZ-LIM_domain"/>
</dbReference>
<dbReference type="InterPro" id="IPR036034">
    <property type="entry name" value="PDZ_sf"/>
</dbReference>
<dbReference type="InterPro" id="IPR001781">
    <property type="entry name" value="Znf_LIM"/>
</dbReference>
<dbReference type="PANTHER" id="PTHR24214:SF1">
    <property type="entry name" value="PDZ AND LIM DOMAIN PROTEIN 2"/>
    <property type="match status" value="1"/>
</dbReference>
<dbReference type="PANTHER" id="PTHR24214">
    <property type="entry name" value="PDZ AND LIM DOMAIN PROTEIN ZASP"/>
    <property type="match status" value="1"/>
</dbReference>
<dbReference type="Pfam" id="PF15936">
    <property type="entry name" value="DUF4749"/>
    <property type="match status" value="1"/>
</dbReference>
<dbReference type="Pfam" id="PF00412">
    <property type="entry name" value="LIM"/>
    <property type="match status" value="1"/>
</dbReference>
<dbReference type="Pfam" id="PF00595">
    <property type="entry name" value="PDZ"/>
    <property type="match status" value="1"/>
</dbReference>
<dbReference type="SMART" id="SM00132">
    <property type="entry name" value="LIM"/>
    <property type="match status" value="1"/>
</dbReference>
<dbReference type="SMART" id="SM00228">
    <property type="entry name" value="PDZ"/>
    <property type="match status" value="1"/>
</dbReference>
<dbReference type="SUPFAM" id="SSF57716">
    <property type="entry name" value="Glucocorticoid receptor-like (DNA-binding domain)"/>
    <property type="match status" value="1"/>
</dbReference>
<dbReference type="SUPFAM" id="SSF50156">
    <property type="entry name" value="PDZ domain-like"/>
    <property type="match status" value="1"/>
</dbReference>
<dbReference type="PROSITE" id="PS00478">
    <property type="entry name" value="LIM_DOMAIN_1"/>
    <property type="match status" value="1"/>
</dbReference>
<dbReference type="PROSITE" id="PS50023">
    <property type="entry name" value="LIM_DOMAIN_2"/>
    <property type="match status" value="1"/>
</dbReference>
<dbReference type="PROSITE" id="PS50106">
    <property type="entry name" value="PDZ"/>
    <property type="match status" value="1"/>
</dbReference>
<proteinExistence type="evidence at transcript level"/>
<protein>
    <recommendedName>
        <fullName>PDZ and LIM domain protein 2</fullName>
    </recommendedName>
</protein>
<sequence length="348" mass="37671">MALTVDVVGPAPWGFRISGGRDFHTPIMVTKVTERGKAEAADLRPGDIIVSINGESAKDMLHAEAQSKIRQSPSPLRLQLDRPQAASPGQANGESSLEVLATRFQSSRRTHTDSQASLSPRPCSPFFTLPPTSPQAPTGEVVTSHSFQSLAYSLEPASADHLYYGGRRGSRQASLSPAGDSAVLVLPPPPSPGARSSSSRLSVVSEGESHLLREDSEVFKMLQENREARMAPRQSSSFRLLQEALEAEERGGTPAYLPSSLSPQSSLPTSRALASPPKLHTCEKCNTSIANQAVRIQEGRYRHPGCYTCADCGLNLKMRGHFWVGDELYCEKHARQRYSAPPTLNSQA</sequence>
<accession>Q3T0C8</accession>
<evidence type="ECO:0000250" key="1"/>
<evidence type="ECO:0000250" key="2">
    <source>
        <dbReference type="UniProtKB" id="Q6AYD6"/>
    </source>
</evidence>
<evidence type="ECO:0000250" key="3">
    <source>
        <dbReference type="UniProtKB" id="Q8R1G6"/>
    </source>
</evidence>
<evidence type="ECO:0000250" key="4">
    <source>
        <dbReference type="UniProtKB" id="Q96JY6"/>
    </source>
</evidence>
<evidence type="ECO:0000255" key="5">
    <source>
        <dbReference type="PROSITE-ProRule" id="PRU00125"/>
    </source>
</evidence>
<evidence type="ECO:0000255" key="6">
    <source>
        <dbReference type="PROSITE-ProRule" id="PRU00143"/>
    </source>
</evidence>
<evidence type="ECO:0000256" key="7">
    <source>
        <dbReference type="SAM" id="MobiDB-lite"/>
    </source>
</evidence>
<reference key="1">
    <citation type="submission" date="2005-08" db="EMBL/GenBank/DDBJ databases">
        <authorList>
            <consortium name="NIH - Mammalian Gene Collection (MGC) project"/>
        </authorList>
    </citation>
    <scope>NUCLEOTIDE SEQUENCE [LARGE SCALE MRNA]</scope>
    <source>
        <strain>Crossbred X Angus</strain>
        <tissue>Ileum</tissue>
    </source>
</reference>
<name>PDLI2_BOVIN</name>
<feature type="chain" id="PRO_0000239837" description="PDZ and LIM domain protein 2">
    <location>
        <begin position="1"/>
        <end position="348"/>
    </location>
</feature>
<feature type="domain" description="PDZ" evidence="6">
    <location>
        <begin position="1"/>
        <end position="84"/>
    </location>
</feature>
<feature type="domain" description="LIM zinc-binding" evidence="5">
    <location>
        <begin position="280"/>
        <end position="340"/>
    </location>
</feature>
<feature type="region of interest" description="Disordered" evidence="7">
    <location>
        <begin position="67"/>
        <end position="139"/>
    </location>
</feature>
<feature type="region of interest" description="Disordered" evidence="7">
    <location>
        <begin position="165"/>
        <end position="202"/>
    </location>
</feature>
<feature type="region of interest" description="Disordered" evidence="7">
    <location>
        <begin position="249"/>
        <end position="275"/>
    </location>
</feature>
<feature type="compositionally biased region" description="Polar residues" evidence="7">
    <location>
        <begin position="103"/>
        <end position="118"/>
    </location>
</feature>
<feature type="compositionally biased region" description="Low complexity" evidence="7">
    <location>
        <begin position="193"/>
        <end position="202"/>
    </location>
</feature>
<feature type="compositionally biased region" description="Low complexity" evidence="7">
    <location>
        <begin position="257"/>
        <end position="270"/>
    </location>
</feature>
<feature type="modified residue" description="Phosphoserine" evidence="3">
    <location>
        <position position="117"/>
    </location>
</feature>
<feature type="modified residue" description="Phosphoserine" evidence="4">
    <location>
        <position position="119"/>
    </location>
</feature>
<feature type="modified residue" description="Phosphoserine" evidence="3">
    <location>
        <position position="124"/>
    </location>
</feature>
<feature type="modified residue" description="Phosphothreonine" evidence="3">
    <location>
        <position position="128"/>
    </location>
</feature>
<feature type="modified residue" description="Phosphothreonine" evidence="3">
    <location>
        <position position="132"/>
    </location>
</feature>
<feature type="modified residue" description="Phosphoserine" evidence="3">
    <location>
        <position position="133"/>
    </location>
</feature>
<feature type="modified residue" description="Phosphoserine" evidence="4">
    <location>
        <position position="153"/>
    </location>
</feature>
<feature type="modified residue" description="Phosphoserine" evidence="4">
    <location>
        <position position="191"/>
    </location>
</feature>
<feature type="modified residue" description="Phosphoserine" evidence="3">
    <location>
        <position position="197"/>
    </location>
</feature>
<feature type="modified residue" description="Phosphoserine" evidence="3">
    <location>
        <position position="198"/>
    </location>
</feature>
<feature type="modified residue" description="Phosphoserine" evidence="3">
    <location>
        <position position="202"/>
    </location>
</feature>
<feature type="modified residue" description="Phosphoserine" evidence="2">
    <location>
        <position position="209"/>
    </location>
</feature>
<feature type="modified residue" description="Phosphoserine" evidence="2">
    <location>
        <position position="262"/>
    </location>
</feature>
<keyword id="KW-0963">Cytoplasm</keyword>
<keyword id="KW-0206">Cytoskeleton</keyword>
<keyword id="KW-0440">LIM domain</keyword>
<keyword id="KW-0479">Metal-binding</keyword>
<keyword id="KW-0597">Phosphoprotein</keyword>
<keyword id="KW-1185">Reference proteome</keyword>
<keyword id="KW-0862">Zinc</keyword>
<organism>
    <name type="scientific">Bos taurus</name>
    <name type="common">Bovine</name>
    <dbReference type="NCBI Taxonomy" id="9913"/>
    <lineage>
        <taxon>Eukaryota</taxon>
        <taxon>Metazoa</taxon>
        <taxon>Chordata</taxon>
        <taxon>Craniata</taxon>
        <taxon>Vertebrata</taxon>
        <taxon>Euteleostomi</taxon>
        <taxon>Mammalia</taxon>
        <taxon>Eutheria</taxon>
        <taxon>Laurasiatheria</taxon>
        <taxon>Artiodactyla</taxon>
        <taxon>Ruminantia</taxon>
        <taxon>Pecora</taxon>
        <taxon>Bovidae</taxon>
        <taxon>Bovinae</taxon>
        <taxon>Bos</taxon>
    </lineage>
</organism>